<comment type="function">
    <text evidence="1">HflC and HflK could encode or regulate a protease.</text>
</comment>
<comment type="subunit">
    <text>HflC and HflK may interact to form a multimeric complex.</text>
</comment>
<comment type="subcellular location">
    <subcellularLocation>
        <location evidence="4">Membrane</location>
        <topology evidence="4">Single-pass membrane protein</topology>
    </subcellularLocation>
</comment>
<comment type="similarity">
    <text evidence="4">Belongs to the band 7/mec-2 family. HflK subfamily.</text>
</comment>
<name>HFLK_VIBPA</name>
<sequence length="400" mass="44237">MAWNEPGNNNGNNGRDNDPWGNNNRGGQRPGGRDQGPPDLDEVFNKLSQKLGGKFGKKGGGGSSIGGGGGAIGFGVIAIIAIAVWIFAGFYTIGEAERGVVLRLGKYDRIVDPGLNWRPRFIDEYEAVNVQAIRSLRASGLMLTKDENVVTVAMDVQYRVADPYKYLYRVTNADDSLRQATDSALRAVIGDSLMDSILTSGRQQIRQSTQETLNQIIDSYDMGLVIVDVNFQSARPPEQVKDAFDDAIAAREDEERFIREAEAYKNEILPKATGRAERLKKEAQGYNERVTNEALGQVAQFEKLLPEYQAAPGVTRDRLYIDAMEEVYTNTSKVLIDSESSGNLLYLPIDKLAGQEGQTDTKRKSKSSSTYDHIQLESERTQEETSNTQSRSTGTRQGRY</sequence>
<reference key="1">
    <citation type="submission" date="1994-04" db="EMBL/GenBank/DDBJ databases">
        <authorList>
            <person name="McCarter L.L."/>
        </authorList>
    </citation>
    <scope>NUCLEOTIDE SEQUENCE [GENOMIC DNA]</scope>
    <source>
        <strain>BB22</strain>
    </source>
</reference>
<reference key="2">
    <citation type="journal article" date="2003" name="Lancet">
        <title>Genome sequence of Vibrio parahaemolyticus: a pathogenic mechanism distinct from that of V. cholerae.</title>
        <authorList>
            <person name="Makino K."/>
            <person name="Oshima K."/>
            <person name="Kurokawa K."/>
            <person name="Yokoyama K."/>
            <person name="Uda T."/>
            <person name="Tagomori K."/>
            <person name="Iijima Y."/>
            <person name="Najima M."/>
            <person name="Nakano M."/>
            <person name="Yamashita A."/>
            <person name="Kubota Y."/>
            <person name="Kimura S."/>
            <person name="Yasunaga T."/>
            <person name="Honda T."/>
            <person name="Shinagawa H."/>
            <person name="Hattori M."/>
            <person name="Iida T."/>
        </authorList>
    </citation>
    <scope>NUCLEOTIDE SEQUENCE [LARGE SCALE GENOMIC DNA]</scope>
    <source>
        <strain>RIMD 2210633</strain>
    </source>
</reference>
<gene>
    <name type="primary">hflK</name>
    <name type="ordered locus">VP2815</name>
</gene>
<dbReference type="EMBL" id="U09005">
    <property type="protein sequence ID" value="AAA62186.1"/>
    <property type="molecule type" value="Genomic_DNA"/>
</dbReference>
<dbReference type="EMBL" id="BA000031">
    <property type="protein sequence ID" value="BAC61078.1"/>
    <property type="molecule type" value="Genomic_DNA"/>
</dbReference>
<dbReference type="RefSeq" id="NP_799194.1">
    <property type="nucleotide sequence ID" value="NC_004603.1"/>
</dbReference>
<dbReference type="RefSeq" id="WP_005460667.1">
    <property type="nucleotide sequence ID" value="NC_004603.1"/>
</dbReference>
<dbReference type="SMR" id="P40605"/>
<dbReference type="GeneID" id="1190365"/>
<dbReference type="KEGG" id="vpa:VP2815"/>
<dbReference type="PATRIC" id="fig|223926.6.peg.2706"/>
<dbReference type="eggNOG" id="COG0330">
    <property type="taxonomic scope" value="Bacteria"/>
</dbReference>
<dbReference type="HOGENOM" id="CLU_039173_1_0_6"/>
<dbReference type="Proteomes" id="UP000002493">
    <property type="component" value="Chromosome 1"/>
</dbReference>
<dbReference type="GO" id="GO:0016020">
    <property type="term" value="C:membrane"/>
    <property type="evidence" value="ECO:0007669"/>
    <property type="project" value="UniProtKB-SubCell"/>
</dbReference>
<dbReference type="CDD" id="cd03404">
    <property type="entry name" value="SPFH_HflK"/>
    <property type="match status" value="1"/>
</dbReference>
<dbReference type="FunFam" id="3.30.479.30:FF:000007">
    <property type="entry name" value="Protein HflK"/>
    <property type="match status" value="1"/>
</dbReference>
<dbReference type="Gene3D" id="3.30.479.30">
    <property type="entry name" value="Band 7 domain"/>
    <property type="match status" value="1"/>
</dbReference>
<dbReference type="InterPro" id="IPR050710">
    <property type="entry name" value="Band7/mec-2_domain"/>
</dbReference>
<dbReference type="InterPro" id="IPR001107">
    <property type="entry name" value="Band_7"/>
</dbReference>
<dbReference type="InterPro" id="IPR036013">
    <property type="entry name" value="Band_7/SPFH_dom_sf"/>
</dbReference>
<dbReference type="InterPro" id="IPR010201">
    <property type="entry name" value="HflK"/>
</dbReference>
<dbReference type="InterPro" id="IPR020980">
    <property type="entry name" value="Membrane_HflK_N"/>
</dbReference>
<dbReference type="InterPro" id="IPR001972">
    <property type="entry name" value="Stomatin_HflK_fam"/>
</dbReference>
<dbReference type="NCBIfam" id="TIGR01933">
    <property type="entry name" value="hflK"/>
    <property type="match status" value="1"/>
</dbReference>
<dbReference type="PANTHER" id="PTHR43327:SF2">
    <property type="entry name" value="MODULATOR OF FTSH PROTEASE HFLK"/>
    <property type="match status" value="1"/>
</dbReference>
<dbReference type="PANTHER" id="PTHR43327">
    <property type="entry name" value="STOMATIN-LIKE PROTEIN 2, MITOCHONDRIAL"/>
    <property type="match status" value="1"/>
</dbReference>
<dbReference type="Pfam" id="PF01145">
    <property type="entry name" value="Band_7"/>
    <property type="match status" value="1"/>
</dbReference>
<dbReference type="Pfam" id="PF12221">
    <property type="entry name" value="HflK_N"/>
    <property type="match status" value="1"/>
</dbReference>
<dbReference type="PRINTS" id="PR00721">
    <property type="entry name" value="STOMATIN"/>
</dbReference>
<dbReference type="SMART" id="SM00244">
    <property type="entry name" value="PHB"/>
    <property type="match status" value="1"/>
</dbReference>
<dbReference type="SUPFAM" id="SSF117892">
    <property type="entry name" value="Band 7/SPFH domain"/>
    <property type="match status" value="1"/>
</dbReference>
<accession>P40605</accession>
<feature type="chain" id="PRO_0000094090" description="Protein HflK">
    <location>
        <begin position="1"/>
        <end position="400"/>
    </location>
</feature>
<feature type="transmembrane region" description="Helical" evidence="2">
    <location>
        <begin position="70"/>
        <end position="90"/>
    </location>
</feature>
<feature type="region of interest" description="Disordered" evidence="3">
    <location>
        <begin position="1"/>
        <end position="43"/>
    </location>
</feature>
<feature type="region of interest" description="Disordered" evidence="3">
    <location>
        <begin position="355"/>
        <end position="400"/>
    </location>
</feature>
<feature type="compositionally biased region" description="Low complexity" evidence="3">
    <location>
        <begin position="1"/>
        <end position="27"/>
    </location>
</feature>
<feature type="compositionally biased region" description="Basic and acidic residues" evidence="3">
    <location>
        <begin position="374"/>
        <end position="383"/>
    </location>
</feature>
<feature type="compositionally biased region" description="Polar residues" evidence="3">
    <location>
        <begin position="384"/>
        <end position="400"/>
    </location>
</feature>
<organism>
    <name type="scientific">Vibrio parahaemolyticus serotype O3:K6 (strain RIMD 2210633)</name>
    <dbReference type="NCBI Taxonomy" id="223926"/>
    <lineage>
        <taxon>Bacteria</taxon>
        <taxon>Pseudomonadati</taxon>
        <taxon>Pseudomonadota</taxon>
        <taxon>Gammaproteobacteria</taxon>
        <taxon>Vibrionales</taxon>
        <taxon>Vibrionaceae</taxon>
        <taxon>Vibrio</taxon>
    </lineage>
</organism>
<protein>
    <recommendedName>
        <fullName>Protein HflK</fullName>
    </recommendedName>
</protein>
<proteinExistence type="inferred from homology"/>
<evidence type="ECO:0000250" key="1"/>
<evidence type="ECO:0000255" key="2"/>
<evidence type="ECO:0000256" key="3">
    <source>
        <dbReference type="SAM" id="MobiDB-lite"/>
    </source>
</evidence>
<evidence type="ECO:0000305" key="4"/>
<keyword id="KW-0472">Membrane</keyword>
<keyword id="KW-0812">Transmembrane</keyword>
<keyword id="KW-1133">Transmembrane helix</keyword>